<protein>
    <recommendedName>
        <fullName evidence="1">Uridylate kinase</fullName>
        <shortName evidence="1">UK</shortName>
        <ecNumber evidence="1">2.7.4.14</ecNumber>
    </recommendedName>
    <alternativeName>
        <fullName evidence="1">ATP:UMP phosphotransferase</fullName>
    </alternativeName>
    <alternativeName>
        <fullName evidence="1">Deoxycytidylate kinase</fullName>
        <shortName evidence="1">CK</shortName>
        <shortName evidence="1">dCMP kinase</shortName>
    </alternativeName>
    <alternativeName>
        <fullName evidence="1">Uridine monophosphate kinase</fullName>
        <shortName evidence="1">UMP kinase</shortName>
        <shortName evidence="1">UMPK</shortName>
    </alternativeName>
</protein>
<evidence type="ECO:0000255" key="1">
    <source>
        <dbReference type="HAMAP-Rule" id="MF_03172"/>
    </source>
</evidence>
<evidence type="ECO:0000269" key="2">
    <source>
    </source>
</evidence>
<keyword id="KW-0067">ATP-binding</keyword>
<keyword id="KW-0963">Cytoplasm</keyword>
<keyword id="KW-0418">Kinase</keyword>
<keyword id="KW-0547">Nucleotide-binding</keyword>
<keyword id="KW-0539">Nucleus</keyword>
<keyword id="KW-0665">Pyrimidine biosynthesis</keyword>
<keyword id="KW-1185">Reference proteome</keyword>
<keyword id="KW-0808">Transferase</keyword>
<proteinExistence type="inferred from homology"/>
<reference key="1">
    <citation type="journal article" date="2002" name="Nature">
        <title>The genome sequence of Schizosaccharomyces pombe.</title>
        <authorList>
            <person name="Wood V."/>
            <person name="Gwilliam R."/>
            <person name="Rajandream M.A."/>
            <person name="Lyne M.H."/>
            <person name="Lyne R."/>
            <person name="Stewart A."/>
            <person name="Sgouros J.G."/>
            <person name="Peat N."/>
            <person name="Hayles J."/>
            <person name="Baker S.G."/>
            <person name="Basham D."/>
            <person name="Bowman S."/>
            <person name="Brooks K."/>
            <person name="Brown D."/>
            <person name="Brown S."/>
            <person name="Chillingworth T."/>
            <person name="Churcher C.M."/>
            <person name="Collins M."/>
            <person name="Connor R."/>
            <person name="Cronin A."/>
            <person name="Davis P."/>
            <person name="Feltwell T."/>
            <person name="Fraser A."/>
            <person name="Gentles S."/>
            <person name="Goble A."/>
            <person name="Hamlin N."/>
            <person name="Harris D.E."/>
            <person name="Hidalgo J."/>
            <person name="Hodgson G."/>
            <person name="Holroyd S."/>
            <person name="Hornsby T."/>
            <person name="Howarth S."/>
            <person name="Huckle E.J."/>
            <person name="Hunt S."/>
            <person name="Jagels K."/>
            <person name="James K.D."/>
            <person name="Jones L."/>
            <person name="Jones M."/>
            <person name="Leather S."/>
            <person name="McDonald S."/>
            <person name="McLean J."/>
            <person name="Mooney P."/>
            <person name="Moule S."/>
            <person name="Mungall K.L."/>
            <person name="Murphy L.D."/>
            <person name="Niblett D."/>
            <person name="Odell C."/>
            <person name="Oliver K."/>
            <person name="O'Neil S."/>
            <person name="Pearson D."/>
            <person name="Quail M.A."/>
            <person name="Rabbinowitsch E."/>
            <person name="Rutherford K.M."/>
            <person name="Rutter S."/>
            <person name="Saunders D."/>
            <person name="Seeger K."/>
            <person name="Sharp S."/>
            <person name="Skelton J."/>
            <person name="Simmonds M.N."/>
            <person name="Squares R."/>
            <person name="Squares S."/>
            <person name="Stevens K."/>
            <person name="Taylor K."/>
            <person name="Taylor R.G."/>
            <person name="Tivey A."/>
            <person name="Walsh S.V."/>
            <person name="Warren T."/>
            <person name="Whitehead S."/>
            <person name="Woodward J.R."/>
            <person name="Volckaert G."/>
            <person name="Aert R."/>
            <person name="Robben J."/>
            <person name="Grymonprez B."/>
            <person name="Weltjens I."/>
            <person name="Vanstreels E."/>
            <person name="Rieger M."/>
            <person name="Schaefer M."/>
            <person name="Mueller-Auer S."/>
            <person name="Gabel C."/>
            <person name="Fuchs M."/>
            <person name="Duesterhoeft A."/>
            <person name="Fritzc C."/>
            <person name="Holzer E."/>
            <person name="Moestl D."/>
            <person name="Hilbert H."/>
            <person name="Borzym K."/>
            <person name="Langer I."/>
            <person name="Beck A."/>
            <person name="Lehrach H."/>
            <person name="Reinhardt R."/>
            <person name="Pohl T.M."/>
            <person name="Eger P."/>
            <person name="Zimmermann W."/>
            <person name="Wedler H."/>
            <person name="Wambutt R."/>
            <person name="Purnelle B."/>
            <person name="Goffeau A."/>
            <person name="Cadieu E."/>
            <person name="Dreano S."/>
            <person name="Gloux S."/>
            <person name="Lelaure V."/>
            <person name="Mottier S."/>
            <person name="Galibert F."/>
            <person name="Aves S.J."/>
            <person name="Xiang Z."/>
            <person name="Hunt C."/>
            <person name="Moore K."/>
            <person name="Hurst S.M."/>
            <person name="Lucas M."/>
            <person name="Rochet M."/>
            <person name="Gaillardin C."/>
            <person name="Tallada V.A."/>
            <person name="Garzon A."/>
            <person name="Thode G."/>
            <person name="Daga R.R."/>
            <person name="Cruzado L."/>
            <person name="Jimenez J."/>
            <person name="Sanchez M."/>
            <person name="del Rey F."/>
            <person name="Benito J."/>
            <person name="Dominguez A."/>
            <person name="Revuelta J.L."/>
            <person name="Moreno S."/>
            <person name="Armstrong J."/>
            <person name="Forsburg S.L."/>
            <person name="Cerutti L."/>
            <person name="Lowe T."/>
            <person name="McCombie W.R."/>
            <person name="Paulsen I."/>
            <person name="Potashkin J."/>
            <person name="Shpakovski G.V."/>
            <person name="Ussery D."/>
            <person name="Barrell B.G."/>
            <person name="Nurse P."/>
        </authorList>
    </citation>
    <scope>NUCLEOTIDE SEQUENCE [LARGE SCALE GENOMIC DNA]</scope>
    <source>
        <strain>972 / ATCC 24843</strain>
    </source>
</reference>
<reference key="2">
    <citation type="journal article" date="2006" name="Nat. Biotechnol.">
        <title>ORFeome cloning and global analysis of protein localization in the fission yeast Schizosaccharomyces pombe.</title>
        <authorList>
            <person name="Matsuyama A."/>
            <person name="Arai R."/>
            <person name="Yashiroda Y."/>
            <person name="Shirai A."/>
            <person name="Kamata A."/>
            <person name="Sekido S."/>
            <person name="Kobayashi Y."/>
            <person name="Hashimoto A."/>
            <person name="Hamamoto M."/>
            <person name="Hiraoka Y."/>
            <person name="Horinouchi S."/>
            <person name="Yoshida M."/>
        </authorList>
    </citation>
    <scope>SUBCELLULAR LOCATION [LARGE SCALE ANALYSIS]</scope>
</reference>
<sequence>MYNVIFVLGGPGAGKGTQCDRLAEKFDKFVHISAGDCLREEQNRPGSKYGNLIKEYIKDGKIVPMEITISLLETKMKECHDKGIDKFLIDGFPREMDQCEGFEKSVCPAKFALYFRCGQETMLKRLIHRGKTSGRSDDNIESIKKRFVTYTKASMPVVEYLKSQNRLITIDAEQDPDAVFEDTVKALQPYL</sequence>
<feature type="chain" id="PRO_0000158946" description="Uridylate kinase">
    <location>
        <begin position="1"/>
        <end position="191"/>
    </location>
</feature>
<feature type="region of interest" description="NMP" evidence="1">
    <location>
        <begin position="33"/>
        <end position="63"/>
    </location>
</feature>
<feature type="region of interest" description="LID" evidence="1">
    <location>
        <begin position="128"/>
        <end position="138"/>
    </location>
</feature>
<feature type="binding site" evidence="1">
    <location>
        <begin position="12"/>
        <end position="17"/>
    </location>
    <ligand>
        <name>ATP</name>
        <dbReference type="ChEBI" id="CHEBI:30616"/>
    </ligand>
</feature>
<feature type="binding site" evidence="1">
    <location>
        <position position="39"/>
    </location>
    <ligand>
        <name>a ribonucleoside 5'-phosphate</name>
        <dbReference type="ChEBI" id="CHEBI:58043"/>
    </ligand>
</feature>
<feature type="binding site" evidence="1">
    <location>
        <begin position="61"/>
        <end position="63"/>
    </location>
    <ligand>
        <name>a ribonucleoside 5'-phosphate</name>
        <dbReference type="ChEBI" id="CHEBI:58043"/>
    </ligand>
</feature>
<feature type="binding site" evidence="1">
    <location>
        <begin position="91"/>
        <end position="94"/>
    </location>
    <ligand>
        <name>a ribonucleoside 5'-phosphate</name>
        <dbReference type="ChEBI" id="CHEBI:58043"/>
    </ligand>
</feature>
<feature type="binding site" evidence="1">
    <location>
        <position position="98"/>
    </location>
    <ligand>
        <name>a ribonucleoside 5'-phosphate</name>
        <dbReference type="ChEBI" id="CHEBI:58043"/>
    </ligand>
</feature>
<feature type="binding site" evidence="1">
    <location>
        <position position="129"/>
    </location>
    <ligand>
        <name>ATP</name>
        <dbReference type="ChEBI" id="CHEBI:30616"/>
    </ligand>
</feature>
<feature type="binding site" evidence="1">
    <location>
        <position position="135"/>
    </location>
    <ligand>
        <name>a ribonucleoside 5'-phosphate</name>
        <dbReference type="ChEBI" id="CHEBI:58043"/>
    </ligand>
</feature>
<feature type="binding site" evidence="1">
    <location>
        <position position="146"/>
    </location>
    <ligand>
        <name>a ribonucleoside 5'-phosphate</name>
        <dbReference type="ChEBI" id="CHEBI:58043"/>
    </ligand>
</feature>
<feature type="binding site" evidence="1">
    <location>
        <position position="174"/>
    </location>
    <ligand>
        <name>ATP</name>
        <dbReference type="ChEBI" id="CHEBI:30616"/>
    </ligand>
</feature>
<comment type="function">
    <text evidence="1">Catalyzes the phosphorylation of pyrimidine nucleoside monophosphates at the expense of ATP. Plays an important role in de novo pyrimidine nucleotide biosynthesis. Has preference for UMP and dUMP as phosphate acceptors, but can also use CMP, dCMP and AMP.</text>
</comment>
<comment type="catalytic activity">
    <reaction evidence="1">
        <text>UMP + ATP = UDP + ADP</text>
        <dbReference type="Rhea" id="RHEA:24400"/>
        <dbReference type="ChEBI" id="CHEBI:30616"/>
        <dbReference type="ChEBI" id="CHEBI:57865"/>
        <dbReference type="ChEBI" id="CHEBI:58223"/>
        <dbReference type="ChEBI" id="CHEBI:456216"/>
        <dbReference type="EC" id="2.7.4.14"/>
    </reaction>
</comment>
<comment type="cofactor">
    <cofactor evidence="1">
        <name>Mg(2+)</name>
        <dbReference type="ChEBI" id="CHEBI:18420"/>
    </cofactor>
    <text evidence="1">Binds 1 Mg(2+) ion per monomer.</text>
</comment>
<comment type="subunit">
    <text evidence="1">Monomer.</text>
</comment>
<comment type="subcellular location">
    <subcellularLocation>
        <location evidence="1 2">Cytoplasm</location>
    </subcellularLocation>
    <subcellularLocation>
        <location evidence="1 2">Nucleus</location>
    </subcellularLocation>
    <text evidence="1">Predominantly cytoplasmic.</text>
</comment>
<comment type="domain">
    <text evidence="1">Consists of three domains, a large central CORE domain and two small peripheral domains, NMPbind and LID, which undergo movements during catalysis. The LID domain closes over the site of phosphoryl transfer upon ATP binding. Assembling and dissambling the active center during each catalytic cycle provides an effective means to prevent ATP hydrolysis.</text>
</comment>
<comment type="similarity">
    <text evidence="1">Belongs to the adenylate kinase family. UMP-CMP kinase subfamily.</text>
</comment>
<name>KCY_SCHPO</name>
<accession>O59771</accession>
<gene>
    <name type="ORF">SPCC1795.05c</name>
</gene>
<dbReference type="EC" id="2.7.4.14" evidence="1"/>
<dbReference type="EMBL" id="CU329672">
    <property type="protein sequence ID" value="CAA18640.1"/>
    <property type="molecule type" value="Genomic_DNA"/>
</dbReference>
<dbReference type="PIR" id="T41138">
    <property type="entry name" value="T41138"/>
</dbReference>
<dbReference type="RefSeq" id="NP_588039.1">
    <property type="nucleotide sequence ID" value="NM_001023031.2"/>
</dbReference>
<dbReference type="SMR" id="O59771"/>
<dbReference type="BioGRID" id="275517">
    <property type="interactions" value="1"/>
</dbReference>
<dbReference type="FunCoup" id="O59771">
    <property type="interactions" value="442"/>
</dbReference>
<dbReference type="STRING" id="284812.O59771"/>
<dbReference type="iPTMnet" id="O59771"/>
<dbReference type="PaxDb" id="4896-SPCC1795.05c.1"/>
<dbReference type="EnsemblFungi" id="SPCC1795.05c.1">
    <property type="protein sequence ID" value="SPCC1795.05c.1:pep"/>
    <property type="gene ID" value="SPCC1795.05c"/>
</dbReference>
<dbReference type="PomBase" id="SPCC1795.05c"/>
<dbReference type="VEuPathDB" id="FungiDB:SPCC1795.05c"/>
<dbReference type="eggNOG" id="KOG3079">
    <property type="taxonomic scope" value="Eukaryota"/>
</dbReference>
<dbReference type="HOGENOM" id="CLU_032354_0_2_1"/>
<dbReference type="InParanoid" id="O59771"/>
<dbReference type="OMA" id="GTQCDRM"/>
<dbReference type="PhylomeDB" id="O59771"/>
<dbReference type="Reactome" id="R-SPO-499943">
    <property type="pathway name" value="Interconversion of nucleotide di- and triphosphates"/>
</dbReference>
<dbReference type="PRO" id="PR:O59771"/>
<dbReference type="Proteomes" id="UP000002485">
    <property type="component" value="Chromosome III"/>
</dbReference>
<dbReference type="GO" id="GO:0005737">
    <property type="term" value="C:cytoplasm"/>
    <property type="evidence" value="ECO:0000318"/>
    <property type="project" value="GO_Central"/>
</dbReference>
<dbReference type="GO" id="GO:0005829">
    <property type="term" value="C:cytosol"/>
    <property type="evidence" value="ECO:0007005"/>
    <property type="project" value="PomBase"/>
</dbReference>
<dbReference type="GO" id="GO:0005634">
    <property type="term" value="C:nucleus"/>
    <property type="evidence" value="ECO:0007005"/>
    <property type="project" value="PomBase"/>
</dbReference>
<dbReference type="GO" id="GO:0004127">
    <property type="term" value="F:(d)CMP kinase activity"/>
    <property type="evidence" value="ECO:0000318"/>
    <property type="project" value="GO_Central"/>
</dbReference>
<dbReference type="GO" id="GO:0005524">
    <property type="term" value="F:ATP binding"/>
    <property type="evidence" value="ECO:0007669"/>
    <property type="project" value="UniProtKB-KW"/>
</dbReference>
<dbReference type="GO" id="GO:0033862">
    <property type="term" value="F:UMP kinase activity"/>
    <property type="evidence" value="ECO:0000318"/>
    <property type="project" value="GO_Central"/>
</dbReference>
<dbReference type="GO" id="GO:0006207">
    <property type="term" value="P:'de novo' pyrimidine nucleobase biosynthetic process"/>
    <property type="evidence" value="ECO:0000266"/>
    <property type="project" value="PomBase"/>
</dbReference>
<dbReference type="GO" id="GO:0046705">
    <property type="term" value="P:CDP biosynthetic process"/>
    <property type="evidence" value="ECO:0000318"/>
    <property type="project" value="GO_Central"/>
</dbReference>
<dbReference type="GO" id="GO:0006225">
    <property type="term" value="P:UDP biosynthetic process"/>
    <property type="evidence" value="ECO:0000318"/>
    <property type="project" value="GO_Central"/>
</dbReference>
<dbReference type="CDD" id="cd01428">
    <property type="entry name" value="ADK"/>
    <property type="match status" value="1"/>
</dbReference>
<dbReference type="FunFam" id="3.40.50.300:FF:000315">
    <property type="entry name" value="Adenylate kinase 1"/>
    <property type="match status" value="1"/>
</dbReference>
<dbReference type="Gene3D" id="3.40.50.300">
    <property type="entry name" value="P-loop containing nucleotide triphosphate hydrolases"/>
    <property type="match status" value="1"/>
</dbReference>
<dbReference type="HAMAP" id="MF_00235">
    <property type="entry name" value="Adenylate_kinase_Adk"/>
    <property type="match status" value="1"/>
</dbReference>
<dbReference type="HAMAP" id="MF_03172">
    <property type="entry name" value="Adenylate_kinase_UMP_CMP_kin"/>
    <property type="match status" value="1"/>
</dbReference>
<dbReference type="InterPro" id="IPR000850">
    <property type="entry name" value="Adenylat/UMP-CMP_kin"/>
</dbReference>
<dbReference type="InterPro" id="IPR033690">
    <property type="entry name" value="Adenylat_kinase_CS"/>
</dbReference>
<dbReference type="InterPro" id="IPR027417">
    <property type="entry name" value="P-loop_NTPase"/>
</dbReference>
<dbReference type="InterPro" id="IPR006266">
    <property type="entry name" value="UMP_CMP_kinase"/>
</dbReference>
<dbReference type="NCBIfam" id="TIGR01359">
    <property type="entry name" value="UMP_CMP_kin_fam"/>
    <property type="match status" value="1"/>
</dbReference>
<dbReference type="PANTHER" id="PTHR23359">
    <property type="entry name" value="NUCLEOTIDE KINASE"/>
    <property type="match status" value="1"/>
</dbReference>
<dbReference type="Pfam" id="PF00406">
    <property type="entry name" value="ADK"/>
    <property type="match status" value="1"/>
</dbReference>
<dbReference type="PRINTS" id="PR00094">
    <property type="entry name" value="ADENYLTKNASE"/>
</dbReference>
<dbReference type="SUPFAM" id="SSF52540">
    <property type="entry name" value="P-loop containing nucleoside triphosphate hydrolases"/>
    <property type="match status" value="1"/>
</dbReference>
<dbReference type="PROSITE" id="PS00113">
    <property type="entry name" value="ADENYLATE_KINASE"/>
    <property type="match status" value="1"/>
</dbReference>
<organism>
    <name type="scientific">Schizosaccharomyces pombe (strain 972 / ATCC 24843)</name>
    <name type="common">Fission yeast</name>
    <dbReference type="NCBI Taxonomy" id="284812"/>
    <lineage>
        <taxon>Eukaryota</taxon>
        <taxon>Fungi</taxon>
        <taxon>Dikarya</taxon>
        <taxon>Ascomycota</taxon>
        <taxon>Taphrinomycotina</taxon>
        <taxon>Schizosaccharomycetes</taxon>
        <taxon>Schizosaccharomycetales</taxon>
        <taxon>Schizosaccharomycetaceae</taxon>
        <taxon>Schizosaccharomyces</taxon>
    </lineage>
</organism>